<keyword id="KW-0223">Dioxygenase</keyword>
<keyword id="KW-0408">Iron</keyword>
<keyword id="KW-0479">Metal-binding</keyword>
<keyword id="KW-0560">Oxidoreductase</keyword>
<keyword id="KW-1185">Reference proteome</keyword>
<protein>
    <recommendedName>
        <fullName evidence="1">Glutarate 2-hydroxylase</fullName>
        <shortName evidence="1">G-2-H</shortName>
        <ecNumber evidence="1">1.14.11.64</ecNumber>
    </recommendedName>
</protein>
<accession>Q83K04</accession>
<proteinExistence type="inferred from homology"/>
<sequence length="310" mass="35725">MNALTAVQNNAVDSGQDYSGFTLIPSAQSPRLLELTFTEQTTKQFLEQVAEWPVQALEYKSFLRFRVGKILDDLCANQLQPLLLKTLLNRAEGALLINAVGIDDVAQADEMVKLATAVAHLIGRSNFDAMSGQYYARFVVKNVDNSDSYLRQPHRVMELHNDGTYVEEITDYVLMMKIDDWEHLDHYFRHPLARRPMRFAAPPSKNVSKDVFHPVFDVDQQGRPVMRYIDQFVQPKDFEEGVWLSELSDAIETSKGILSVPVPVGKFLLINNLFWLHGRDRFTPHPDLRRELMRQRGYFAYATHHYQTHQ</sequence>
<dbReference type="EC" id="1.14.11.64" evidence="1"/>
<dbReference type="EMBL" id="AE005674">
    <property type="protein sequence ID" value="AAN44180.1"/>
    <property type="status" value="ALT_INIT"/>
    <property type="molecule type" value="Genomic_DNA"/>
</dbReference>
<dbReference type="EMBL" id="AE014073">
    <property type="protein sequence ID" value="AAP18007.1"/>
    <property type="status" value="ALT_INIT"/>
    <property type="molecule type" value="Genomic_DNA"/>
</dbReference>
<dbReference type="RefSeq" id="NP_708473.3">
    <property type="nucleotide sequence ID" value="NC_004337.2"/>
</dbReference>
<dbReference type="RefSeq" id="WP_005051331.1">
    <property type="nucleotide sequence ID" value="NZ_WPGW01000146.1"/>
</dbReference>
<dbReference type="SMR" id="Q83K04"/>
<dbReference type="STRING" id="198214.SF2686"/>
<dbReference type="PaxDb" id="198214-SF2686"/>
<dbReference type="GeneID" id="1025708"/>
<dbReference type="KEGG" id="sfl:SF2686"/>
<dbReference type="KEGG" id="sfx:S2871"/>
<dbReference type="PATRIC" id="fig|198214.7.peg.3197"/>
<dbReference type="HOGENOM" id="CLU_075277_0_0_6"/>
<dbReference type="Proteomes" id="UP000001006">
    <property type="component" value="Chromosome"/>
</dbReference>
<dbReference type="Proteomes" id="UP000002673">
    <property type="component" value="Chromosome"/>
</dbReference>
<dbReference type="GO" id="GO:0008198">
    <property type="term" value="F:ferrous iron binding"/>
    <property type="evidence" value="ECO:0007669"/>
    <property type="project" value="UniProtKB-UniRule"/>
</dbReference>
<dbReference type="GO" id="GO:0106343">
    <property type="term" value="F:glutarate dioxygenase activity"/>
    <property type="evidence" value="ECO:0007669"/>
    <property type="project" value="UniProtKB-EC"/>
</dbReference>
<dbReference type="GO" id="GO:0050498">
    <property type="term" value="F:oxidoreductase activity, acting on paired donors, with incorporation or reduction of molecular oxygen, with 2-oxoglutarate as one donor, and the other dehydrogenated"/>
    <property type="evidence" value="ECO:0007669"/>
    <property type="project" value="UniProtKB-UniRule"/>
</dbReference>
<dbReference type="GO" id="GO:0019477">
    <property type="term" value="P:L-lysine catabolic process"/>
    <property type="evidence" value="ECO:0007669"/>
    <property type="project" value="UniProtKB-UniRule"/>
</dbReference>
<dbReference type="CDD" id="cd00250">
    <property type="entry name" value="CAS_like"/>
    <property type="match status" value="1"/>
</dbReference>
<dbReference type="FunFam" id="3.60.130.10:FF:000004">
    <property type="entry name" value="Glutarate 2-hydroxylase"/>
    <property type="match status" value="1"/>
</dbReference>
<dbReference type="Gene3D" id="3.60.130.10">
    <property type="entry name" value="Clavaminate synthase-like"/>
    <property type="match status" value="1"/>
</dbReference>
<dbReference type="HAMAP" id="MF_01083">
    <property type="entry name" value="glutarate_hydroxylase"/>
    <property type="match status" value="1"/>
</dbReference>
<dbReference type="InterPro" id="IPR015038">
    <property type="entry name" value="GlaH"/>
</dbReference>
<dbReference type="InterPro" id="IPR042098">
    <property type="entry name" value="TauD-like_sf"/>
</dbReference>
<dbReference type="NCBIfam" id="NF002814">
    <property type="entry name" value="PRK02963.1"/>
    <property type="match status" value="1"/>
</dbReference>
<dbReference type="Pfam" id="PF08943">
    <property type="entry name" value="CsiD"/>
    <property type="match status" value="1"/>
</dbReference>
<dbReference type="SUPFAM" id="SSF51197">
    <property type="entry name" value="Clavaminate synthase-like"/>
    <property type="match status" value="1"/>
</dbReference>
<reference key="1">
    <citation type="journal article" date="2002" name="Nucleic Acids Res.">
        <title>Genome sequence of Shigella flexneri 2a: insights into pathogenicity through comparison with genomes of Escherichia coli K12 and O157.</title>
        <authorList>
            <person name="Jin Q."/>
            <person name="Yuan Z."/>
            <person name="Xu J."/>
            <person name="Wang Y."/>
            <person name="Shen Y."/>
            <person name="Lu W."/>
            <person name="Wang J."/>
            <person name="Liu H."/>
            <person name="Yang J."/>
            <person name="Yang F."/>
            <person name="Zhang X."/>
            <person name="Zhang J."/>
            <person name="Yang G."/>
            <person name="Wu H."/>
            <person name="Qu D."/>
            <person name="Dong J."/>
            <person name="Sun L."/>
            <person name="Xue Y."/>
            <person name="Zhao A."/>
            <person name="Gao Y."/>
            <person name="Zhu J."/>
            <person name="Kan B."/>
            <person name="Ding K."/>
            <person name="Chen S."/>
            <person name="Cheng H."/>
            <person name="Yao Z."/>
            <person name="He B."/>
            <person name="Chen R."/>
            <person name="Ma D."/>
            <person name="Qiang B."/>
            <person name="Wen Y."/>
            <person name="Hou Y."/>
            <person name="Yu J."/>
        </authorList>
    </citation>
    <scope>NUCLEOTIDE SEQUENCE [LARGE SCALE GENOMIC DNA]</scope>
    <source>
        <strain>301 / Serotype 2a</strain>
    </source>
</reference>
<reference key="2">
    <citation type="journal article" date="2003" name="Infect. Immun.">
        <title>Complete genome sequence and comparative genomics of Shigella flexneri serotype 2a strain 2457T.</title>
        <authorList>
            <person name="Wei J."/>
            <person name="Goldberg M.B."/>
            <person name="Burland V."/>
            <person name="Venkatesan M.M."/>
            <person name="Deng W."/>
            <person name="Fournier G."/>
            <person name="Mayhew G.F."/>
            <person name="Plunkett G. III"/>
            <person name="Rose D.J."/>
            <person name="Darling A."/>
            <person name="Mau B."/>
            <person name="Perna N.T."/>
            <person name="Payne S.M."/>
            <person name="Runyen-Janecky L.J."/>
            <person name="Zhou S."/>
            <person name="Schwartz D.C."/>
            <person name="Blattner F.R."/>
        </authorList>
    </citation>
    <scope>NUCLEOTIDE SEQUENCE [LARGE SCALE GENOMIC DNA]</scope>
    <source>
        <strain>ATCC 700930 / 2457T / Serotype 2a</strain>
    </source>
</reference>
<comment type="function">
    <text evidence="1">Acts as an alpha-ketoglutarate-dependent dioxygenase catalyzing hydroxylation of glutarate (GA) to L-2-hydroxyglutarate (L2HG). Functions in a L-lysine degradation pathway that proceeds via cadaverine, glutarate and L-2-hydroxyglutarate.</text>
</comment>
<comment type="catalytic activity">
    <reaction evidence="1">
        <text>glutarate + 2-oxoglutarate + O2 = (S)-2-hydroxyglutarate + succinate + CO2</text>
        <dbReference type="Rhea" id="RHEA:13821"/>
        <dbReference type="ChEBI" id="CHEBI:15379"/>
        <dbReference type="ChEBI" id="CHEBI:16526"/>
        <dbReference type="ChEBI" id="CHEBI:16782"/>
        <dbReference type="ChEBI" id="CHEBI:16810"/>
        <dbReference type="ChEBI" id="CHEBI:30031"/>
        <dbReference type="ChEBI" id="CHEBI:30921"/>
        <dbReference type="EC" id="1.14.11.64"/>
    </reaction>
    <physiologicalReaction direction="left-to-right" evidence="1">
        <dbReference type="Rhea" id="RHEA:13822"/>
    </physiologicalReaction>
</comment>
<comment type="cofactor">
    <cofactor evidence="1">
        <name>Fe(2+)</name>
        <dbReference type="ChEBI" id="CHEBI:29033"/>
    </cofactor>
    <text evidence="1">Binds 1 Fe(2+) ion per subunit.</text>
</comment>
<comment type="pathway">
    <text evidence="1">Amino-acid degradation.</text>
</comment>
<comment type="subunit">
    <text evidence="1">Homotetramer.</text>
</comment>
<comment type="similarity">
    <text evidence="1">Belongs to the glutarate hydroxylase family.</text>
</comment>
<comment type="sequence caution" evidence="2">
    <conflict type="erroneous initiation">
        <sequence resource="EMBL-CDS" id="AAN44180"/>
    </conflict>
</comment>
<comment type="sequence caution" evidence="2">
    <conflict type="erroneous initiation">
        <sequence resource="EMBL-CDS" id="AAP18007"/>
    </conflict>
</comment>
<gene>
    <name evidence="1" type="primary">glaH</name>
    <name type="ordered locus">SF2686</name>
    <name type="ordered locus">S2871</name>
</gene>
<name>GLAH_SHIFL</name>
<feature type="chain" id="PRO_0000218183" description="Glutarate 2-hydroxylase">
    <location>
        <begin position="1"/>
        <end position="310"/>
    </location>
</feature>
<feature type="binding site" evidence="1">
    <location>
        <position position="160"/>
    </location>
    <ligand>
        <name>Fe cation</name>
        <dbReference type="ChEBI" id="CHEBI:24875"/>
    </ligand>
</feature>
<feature type="binding site" evidence="1">
    <location>
        <position position="162"/>
    </location>
    <ligand>
        <name>Fe cation</name>
        <dbReference type="ChEBI" id="CHEBI:24875"/>
    </ligand>
</feature>
<feature type="binding site" evidence="1">
    <location>
        <position position="277"/>
    </location>
    <ligand>
        <name>Fe cation</name>
        <dbReference type="ChEBI" id="CHEBI:24875"/>
    </ligand>
</feature>
<organism>
    <name type="scientific">Shigella flexneri</name>
    <dbReference type="NCBI Taxonomy" id="623"/>
    <lineage>
        <taxon>Bacteria</taxon>
        <taxon>Pseudomonadati</taxon>
        <taxon>Pseudomonadota</taxon>
        <taxon>Gammaproteobacteria</taxon>
        <taxon>Enterobacterales</taxon>
        <taxon>Enterobacteriaceae</taxon>
        <taxon>Shigella</taxon>
    </lineage>
</organism>
<evidence type="ECO:0000255" key="1">
    <source>
        <dbReference type="HAMAP-Rule" id="MF_01083"/>
    </source>
</evidence>
<evidence type="ECO:0000305" key="2"/>